<name>BIOB_SORC5</name>
<proteinExistence type="inferred from homology"/>
<accession>A9EXH2</accession>
<keyword id="KW-0001">2Fe-2S</keyword>
<keyword id="KW-0004">4Fe-4S</keyword>
<keyword id="KW-0093">Biotin biosynthesis</keyword>
<keyword id="KW-0408">Iron</keyword>
<keyword id="KW-0411">Iron-sulfur</keyword>
<keyword id="KW-0479">Metal-binding</keyword>
<keyword id="KW-1185">Reference proteome</keyword>
<keyword id="KW-0949">S-adenosyl-L-methionine</keyword>
<keyword id="KW-0808">Transferase</keyword>
<comment type="function">
    <text evidence="1">Catalyzes the conversion of dethiobiotin (DTB) to biotin by the insertion of a sulfur atom into dethiobiotin via a radical-based mechanism.</text>
</comment>
<comment type="catalytic activity">
    <reaction evidence="1">
        <text>(4R,5S)-dethiobiotin + (sulfur carrier)-SH + 2 reduced [2Fe-2S]-[ferredoxin] + 2 S-adenosyl-L-methionine = (sulfur carrier)-H + biotin + 2 5'-deoxyadenosine + 2 L-methionine + 2 oxidized [2Fe-2S]-[ferredoxin]</text>
        <dbReference type="Rhea" id="RHEA:22060"/>
        <dbReference type="Rhea" id="RHEA-COMP:10000"/>
        <dbReference type="Rhea" id="RHEA-COMP:10001"/>
        <dbReference type="Rhea" id="RHEA-COMP:14737"/>
        <dbReference type="Rhea" id="RHEA-COMP:14739"/>
        <dbReference type="ChEBI" id="CHEBI:17319"/>
        <dbReference type="ChEBI" id="CHEBI:29917"/>
        <dbReference type="ChEBI" id="CHEBI:33737"/>
        <dbReference type="ChEBI" id="CHEBI:33738"/>
        <dbReference type="ChEBI" id="CHEBI:57586"/>
        <dbReference type="ChEBI" id="CHEBI:57844"/>
        <dbReference type="ChEBI" id="CHEBI:59789"/>
        <dbReference type="ChEBI" id="CHEBI:64428"/>
        <dbReference type="ChEBI" id="CHEBI:149473"/>
        <dbReference type="EC" id="2.8.1.6"/>
    </reaction>
</comment>
<comment type="cofactor">
    <cofactor evidence="1">
        <name>[4Fe-4S] cluster</name>
        <dbReference type="ChEBI" id="CHEBI:49883"/>
    </cofactor>
    <text evidence="1">Binds 1 [4Fe-4S] cluster. The cluster is coordinated with 3 cysteines and an exchangeable S-adenosyl-L-methionine.</text>
</comment>
<comment type="cofactor">
    <cofactor evidence="1">
        <name>[2Fe-2S] cluster</name>
        <dbReference type="ChEBI" id="CHEBI:190135"/>
    </cofactor>
    <text evidence="1">Binds 1 [2Fe-2S] cluster. The cluster is coordinated with 3 cysteines and 1 arginine.</text>
</comment>
<comment type="pathway">
    <text evidence="1">Cofactor biosynthesis; biotin biosynthesis; biotin from 7,8-diaminononanoate: step 2/2.</text>
</comment>
<comment type="subunit">
    <text evidence="1">Homodimer.</text>
</comment>
<comment type="similarity">
    <text evidence="1">Belongs to the radical SAM superfamily. Biotin synthase family.</text>
</comment>
<comment type="sequence caution" evidence="4">
    <conflict type="erroneous initiation">
        <sequence resource="EMBL-CDS" id="CAN94410"/>
    </conflict>
</comment>
<protein>
    <recommendedName>
        <fullName evidence="1">Biotin synthase</fullName>
        <ecNumber evidence="1">2.8.1.6</ecNumber>
    </recommendedName>
</protein>
<organism>
    <name type="scientific">Sorangium cellulosum (strain So ce56)</name>
    <name type="common">Polyangium cellulosum (strain So ce56)</name>
    <dbReference type="NCBI Taxonomy" id="448385"/>
    <lineage>
        <taxon>Bacteria</taxon>
        <taxon>Pseudomonadati</taxon>
        <taxon>Myxococcota</taxon>
        <taxon>Polyangia</taxon>
        <taxon>Polyangiales</taxon>
        <taxon>Polyangiaceae</taxon>
        <taxon>Sorangium</taxon>
    </lineage>
</organism>
<feature type="chain" id="PRO_0000381639" description="Biotin synthase">
    <location>
        <begin position="1"/>
        <end position="349"/>
    </location>
</feature>
<feature type="domain" description="Radical SAM core" evidence="2">
    <location>
        <begin position="64"/>
        <end position="283"/>
    </location>
</feature>
<feature type="region of interest" description="Disordered" evidence="3">
    <location>
        <begin position="1"/>
        <end position="30"/>
    </location>
</feature>
<feature type="compositionally biased region" description="Basic and acidic residues" evidence="3">
    <location>
        <begin position="1"/>
        <end position="11"/>
    </location>
</feature>
<feature type="binding site" evidence="1">
    <location>
        <position position="79"/>
    </location>
    <ligand>
        <name>[4Fe-4S] cluster</name>
        <dbReference type="ChEBI" id="CHEBI:49883"/>
        <note>4Fe-4S-S-AdoMet</note>
    </ligand>
</feature>
<feature type="binding site" evidence="1">
    <location>
        <position position="83"/>
    </location>
    <ligand>
        <name>[4Fe-4S] cluster</name>
        <dbReference type="ChEBI" id="CHEBI:49883"/>
        <note>4Fe-4S-S-AdoMet</note>
    </ligand>
</feature>
<feature type="binding site" evidence="1">
    <location>
        <position position="86"/>
    </location>
    <ligand>
        <name>[4Fe-4S] cluster</name>
        <dbReference type="ChEBI" id="CHEBI:49883"/>
        <note>4Fe-4S-S-AdoMet</note>
    </ligand>
</feature>
<feature type="binding site" evidence="1">
    <location>
        <position position="123"/>
    </location>
    <ligand>
        <name>[2Fe-2S] cluster</name>
        <dbReference type="ChEBI" id="CHEBI:190135"/>
    </ligand>
</feature>
<feature type="binding site" evidence="1">
    <location>
        <position position="155"/>
    </location>
    <ligand>
        <name>[2Fe-2S] cluster</name>
        <dbReference type="ChEBI" id="CHEBI:190135"/>
    </ligand>
</feature>
<feature type="binding site" evidence="1">
    <location>
        <position position="215"/>
    </location>
    <ligand>
        <name>[2Fe-2S] cluster</name>
        <dbReference type="ChEBI" id="CHEBI:190135"/>
    </ligand>
</feature>
<feature type="binding site" evidence="1">
    <location>
        <position position="287"/>
    </location>
    <ligand>
        <name>[2Fe-2S] cluster</name>
        <dbReference type="ChEBI" id="CHEBI:190135"/>
    </ligand>
</feature>
<sequence>MLEGIEREAAEHSNGCSGPAGHAPPAGAPRHDWTVQQAVALHDLPLFELIDRARAVHRAFHGEHEVQLCTLLSVKTGGCPEDCAYCPQSSHYETEVGPERMLDVGAVLAAAERAREGGSTRFCMGAAWREVKDGPAFERVLDMVRGVKALGLEACCTLGMLTDDQARRLKEAGLDAYNHNLDTSRKAYKSIISTRTYDERLVTLRNVRRAGITVCSGGIIGMGESIADRCEMLVELARLDPHPESVPINALVRSPGTPLESLPPVDPIEFVRMIAVARVMMPRAMVRLSAGRTELSRETQLLCMYAGANSIFYGDRLLTTPNPGQDEDRALIEKAGLQPMAPAAARAAR</sequence>
<dbReference type="EC" id="2.8.1.6" evidence="1"/>
<dbReference type="EMBL" id="AM746676">
    <property type="protein sequence ID" value="CAN94410.1"/>
    <property type="status" value="ALT_INIT"/>
    <property type="molecule type" value="Genomic_DNA"/>
</dbReference>
<dbReference type="RefSeq" id="WP_044968914.1">
    <property type="nucleotide sequence ID" value="NC_010162.1"/>
</dbReference>
<dbReference type="SMR" id="A9EXH2"/>
<dbReference type="STRING" id="448385.sce4247"/>
<dbReference type="KEGG" id="scl:sce4247"/>
<dbReference type="eggNOG" id="COG0502">
    <property type="taxonomic scope" value="Bacteria"/>
</dbReference>
<dbReference type="HOGENOM" id="CLU_033172_1_2_7"/>
<dbReference type="OrthoDB" id="9786826at2"/>
<dbReference type="BioCyc" id="SCEL448385:SCE_RS21820-MONOMER"/>
<dbReference type="UniPathway" id="UPA00078">
    <property type="reaction ID" value="UER00162"/>
</dbReference>
<dbReference type="Proteomes" id="UP000002139">
    <property type="component" value="Chromosome"/>
</dbReference>
<dbReference type="GO" id="GO:0051537">
    <property type="term" value="F:2 iron, 2 sulfur cluster binding"/>
    <property type="evidence" value="ECO:0007669"/>
    <property type="project" value="UniProtKB-KW"/>
</dbReference>
<dbReference type="GO" id="GO:0051539">
    <property type="term" value="F:4 iron, 4 sulfur cluster binding"/>
    <property type="evidence" value="ECO:0007669"/>
    <property type="project" value="UniProtKB-KW"/>
</dbReference>
<dbReference type="GO" id="GO:0004076">
    <property type="term" value="F:biotin synthase activity"/>
    <property type="evidence" value="ECO:0007669"/>
    <property type="project" value="UniProtKB-UniRule"/>
</dbReference>
<dbReference type="GO" id="GO:0005506">
    <property type="term" value="F:iron ion binding"/>
    <property type="evidence" value="ECO:0007669"/>
    <property type="project" value="UniProtKB-UniRule"/>
</dbReference>
<dbReference type="GO" id="GO:0009102">
    <property type="term" value="P:biotin biosynthetic process"/>
    <property type="evidence" value="ECO:0007669"/>
    <property type="project" value="UniProtKB-UniRule"/>
</dbReference>
<dbReference type="CDD" id="cd01335">
    <property type="entry name" value="Radical_SAM"/>
    <property type="match status" value="1"/>
</dbReference>
<dbReference type="Gene3D" id="3.20.20.70">
    <property type="entry name" value="Aldolase class I"/>
    <property type="match status" value="1"/>
</dbReference>
<dbReference type="HAMAP" id="MF_01694">
    <property type="entry name" value="BioB"/>
    <property type="match status" value="1"/>
</dbReference>
<dbReference type="InterPro" id="IPR013785">
    <property type="entry name" value="Aldolase_TIM"/>
</dbReference>
<dbReference type="InterPro" id="IPR010722">
    <property type="entry name" value="BATS_dom"/>
</dbReference>
<dbReference type="InterPro" id="IPR002684">
    <property type="entry name" value="Biotin_synth/BioAB"/>
</dbReference>
<dbReference type="InterPro" id="IPR024177">
    <property type="entry name" value="Biotin_synthase"/>
</dbReference>
<dbReference type="InterPro" id="IPR006638">
    <property type="entry name" value="Elp3/MiaA/NifB-like_rSAM"/>
</dbReference>
<dbReference type="InterPro" id="IPR007197">
    <property type="entry name" value="rSAM"/>
</dbReference>
<dbReference type="NCBIfam" id="TIGR00433">
    <property type="entry name" value="bioB"/>
    <property type="match status" value="1"/>
</dbReference>
<dbReference type="PANTHER" id="PTHR22976">
    <property type="entry name" value="BIOTIN SYNTHASE"/>
    <property type="match status" value="1"/>
</dbReference>
<dbReference type="PANTHER" id="PTHR22976:SF2">
    <property type="entry name" value="BIOTIN SYNTHASE, MITOCHONDRIAL"/>
    <property type="match status" value="1"/>
</dbReference>
<dbReference type="Pfam" id="PF06968">
    <property type="entry name" value="BATS"/>
    <property type="match status" value="1"/>
</dbReference>
<dbReference type="Pfam" id="PF04055">
    <property type="entry name" value="Radical_SAM"/>
    <property type="match status" value="1"/>
</dbReference>
<dbReference type="PIRSF" id="PIRSF001619">
    <property type="entry name" value="Biotin_synth"/>
    <property type="match status" value="1"/>
</dbReference>
<dbReference type="SFLD" id="SFLDG01060">
    <property type="entry name" value="BATS_domain_containing"/>
    <property type="match status" value="1"/>
</dbReference>
<dbReference type="SFLD" id="SFLDF00272">
    <property type="entry name" value="biotin_synthase"/>
    <property type="match status" value="1"/>
</dbReference>
<dbReference type="SMART" id="SM00876">
    <property type="entry name" value="BATS"/>
    <property type="match status" value="1"/>
</dbReference>
<dbReference type="SMART" id="SM00729">
    <property type="entry name" value="Elp3"/>
    <property type="match status" value="1"/>
</dbReference>
<dbReference type="SUPFAM" id="SSF102114">
    <property type="entry name" value="Radical SAM enzymes"/>
    <property type="match status" value="1"/>
</dbReference>
<dbReference type="PROSITE" id="PS51918">
    <property type="entry name" value="RADICAL_SAM"/>
    <property type="match status" value="1"/>
</dbReference>
<evidence type="ECO:0000255" key="1">
    <source>
        <dbReference type="HAMAP-Rule" id="MF_01694"/>
    </source>
</evidence>
<evidence type="ECO:0000255" key="2">
    <source>
        <dbReference type="PROSITE-ProRule" id="PRU01266"/>
    </source>
</evidence>
<evidence type="ECO:0000256" key="3">
    <source>
        <dbReference type="SAM" id="MobiDB-lite"/>
    </source>
</evidence>
<evidence type="ECO:0000305" key="4"/>
<reference key="1">
    <citation type="journal article" date="2007" name="Nat. Biotechnol.">
        <title>Complete genome sequence of the myxobacterium Sorangium cellulosum.</title>
        <authorList>
            <person name="Schneiker S."/>
            <person name="Perlova O."/>
            <person name="Kaiser O."/>
            <person name="Gerth K."/>
            <person name="Alici A."/>
            <person name="Altmeyer M.O."/>
            <person name="Bartels D."/>
            <person name="Bekel T."/>
            <person name="Beyer S."/>
            <person name="Bode E."/>
            <person name="Bode H.B."/>
            <person name="Bolten C.J."/>
            <person name="Choudhuri J.V."/>
            <person name="Doss S."/>
            <person name="Elnakady Y.A."/>
            <person name="Frank B."/>
            <person name="Gaigalat L."/>
            <person name="Goesmann A."/>
            <person name="Groeger C."/>
            <person name="Gross F."/>
            <person name="Jelsbak L."/>
            <person name="Jelsbak L."/>
            <person name="Kalinowski J."/>
            <person name="Kegler C."/>
            <person name="Knauber T."/>
            <person name="Konietzny S."/>
            <person name="Kopp M."/>
            <person name="Krause L."/>
            <person name="Krug D."/>
            <person name="Linke B."/>
            <person name="Mahmud T."/>
            <person name="Martinez-Arias R."/>
            <person name="McHardy A.C."/>
            <person name="Merai M."/>
            <person name="Meyer F."/>
            <person name="Mormann S."/>
            <person name="Munoz-Dorado J."/>
            <person name="Perez J."/>
            <person name="Pradella S."/>
            <person name="Rachid S."/>
            <person name="Raddatz G."/>
            <person name="Rosenau F."/>
            <person name="Rueckert C."/>
            <person name="Sasse F."/>
            <person name="Scharfe M."/>
            <person name="Schuster S.C."/>
            <person name="Suen G."/>
            <person name="Treuner-Lange A."/>
            <person name="Velicer G.J."/>
            <person name="Vorholter F.-J."/>
            <person name="Weissman K.J."/>
            <person name="Welch R.D."/>
            <person name="Wenzel S.C."/>
            <person name="Whitworth D.E."/>
            <person name="Wilhelm S."/>
            <person name="Wittmann C."/>
            <person name="Bloecker H."/>
            <person name="Puehler A."/>
            <person name="Mueller R."/>
        </authorList>
    </citation>
    <scope>NUCLEOTIDE SEQUENCE [LARGE SCALE GENOMIC DNA]</scope>
    <source>
        <strain>So ce56</strain>
    </source>
</reference>
<gene>
    <name evidence="1" type="primary">bioB</name>
    <name type="ordered locus">sce4247</name>
</gene>